<comment type="function">
    <text evidence="1">Catalyzes the conversion of L-arabinose to L-ribulose.</text>
</comment>
<comment type="catalytic activity">
    <reaction evidence="1">
        <text>beta-L-arabinopyranose = L-ribulose</text>
        <dbReference type="Rhea" id="RHEA:14821"/>
        <dbReference type="ChEBI" id="CHEBI:16880"/>
        <dbReference type="ChEBI" id="CHEBI:40886"/>
        <dbReference type="EC" id="5.3.1.4"/>
    </reaction>
</comment>
<comment type="cofactor">
    <cofactor evidence="1">
        <name>Mn(2+)</name>
        <dbReference type="ChEBI" id="CHEBI:29035"/>
    </cofactor>
    <text evidence="1">Binds 1 Mn(2+) ion per subunit.</text>
</comment>
<comment type="pathway">
    <text evidence="1">Carbohydrate degradation; L-arabinose degradation via L-ribulose; D-xylulose 5-phosphate from L-arabinose (bacterial route): step 1/3.</text>
</comment>
<comment type="subunit">
    <text evidence="1">Homohexamer.</text>
</comment>
<comment type="similarity">
    <text evidence="1">Belongs to the arabinose isomerase family.</text>
</comment>
<gene>
    <name evidence="1" type="primary">araA</name>
    <name type="ordered locus">SSPA0100</name>
</gene>
<organism>
    <name type="scientific">Salmonella paratyphi A (strain AKU_12601)</name>
    <dbReference type="NCBI Taxonomy" id="554290"/>
    <lineage>
        <taxon>Bacteria</taxon>
        <taxon>Pseudomonadati</taxon>
        <taxon>Pseudomonadota</taxon>
        <taxon>Gammaproteobacteria</taxon>
        <taxon>Enterobacterales</taxon>
        <taxon>Enterobacteriaceae</taxon>
        <taxon>Salmonella</taxon>
    </lineage>
</organism>
<proteinExistence type="inferred from homology"/>
<keyword id="KW-0054">Arabinose catabolism</keyword>
<keyword id="KW-0119">Carbohydrate metabolism</keyword>
<keyword id="KW-0413">Isomerase</keyword>
<keyword id="KW-0464">Manganese</keyword>
<keyword id="KW-0479">Metal-binding</keyword>
<reference key="1">
    <citation type="journal article" date="2009" name="BMC Genomics">
        <title>Pseudogene accumulation in the evolutionary histories of Salmonella enterica serovars Paratyphi A and Typhi.</title>
        <authorList>
            <person name="Holt K.E."/>
            <person name="Thomson N.R."/>
            <person name="Wain J."/>
            <person name="Langridge G.C."/>
            <person name="Hasan R."/>
            <person name="Bhutta Z.A."/>
            <person name="Quail M.A."/>
            <person name="Norbertczak H."/>
            <person name="Walker D."/>
            <person name="Simmonds M."/>
            <person name="White B."/>
            <person name="Bason N."/>
            <person name="Mungall K."/>
            <person name="Dougan G."/>
            <person name="Parkhill J."/>
        </authorList>
    </citation>
    <scope>NUCLEOTIDE SEQUENCE [LARGE SCALE GENOMIC DNA]</scope>
    <source>
        <strain>AKU_12601</strain>
    </source>
</reference>
<evidence type="ECO:0000255" key="1">
    <source>
        <dbReference type="HAMAP-Rule" id="MF_00519"/>
    </source>
</evidence>
<protein>
    <recommendedName>
        <fullName evidence="1">L-arabinose isomerase</fullName>
        <ecNumber evidence="1">5.3.1.4</ecNumber>
    </recommendedName>
</protein>
<dbReference type="EC" id="5.3.1.4" evidence="1"/>
<dbReference type="EMBL" id="FM200053">
    <property type="protein sequence ID" value="CAR58211.1"/>
    <property type="molecule type" value="Genomic_DNA"/>
</dbReference>
<dbReference type="RefSeq" id="WP_000151699.1">
    <property type="nucleotide sequence ID" value="NC_011147.1"/>
</dbReference>
<dbReference type="SMR" id="B5BL43"/>
<dbReference type="KEGG" id="sek:SSPA0100"/>
<dbReference type="HOGENOM" id="CLU_045663_0_0_6"/>
<dbReference type="UniPathway" id="UPA00145">
    <property type="reaction ID" value="UER00565"/>
</dbReference>
<dbReference type="Proteomes" id="UP000001869">
    <property type="component" value="Chromosome"/>
</dbReference>
<dbReference type="GO" id="GO:0005829">
    <property type="term" value="C:cytosol"/>
    <property type="evidence" value="ECO:0007669"/>
    <property type="project" value="TreeGrafter"/>
</dbReference>
<dbReference type="GO" id="GO:0008733">
    <property type="term" value="F:L-arabinose isomerase activity"/>
    <property type="evidence" value="ECO:0007669"/>
    <property type="project" value="UniProtKB-UniRule"/>
</dbReference>
<dbReference type="GO" id="GO:0030145">
    <property type="term" value="F:manganese ion binding"/>
    <property type="evidence" value="ECO:0007669"/>
    <property type="project" value="UniProtKB-UniRule"/>
</dbReference>
<dbReference type="GO" id="GO:0019569">
    <property type="term" value="P:L-arabinose catabolic process to xylulose 5-phosphate"/>
    <property type="evidence" value="ECO:0007669"/>
    <property type="project" value="UniProtKB-UniRule"/>
</dbReference>
<dbReference type="CDD" id="cd03557">
    <property type="entry name" value="L-arabinose_isomerase"/>
    <property type="match status" value="1"/>
</dbReference>
<dbReference type="FunFam" id="3.40.50.10940:FF:000001">
    <property type="entry name" value="L-arabinose isomerase"/>
    <property type="match status" value="1"/>
</dbReference>
<dbReference type="Gene3D" id="3.40.50.10940">
    <property type="match status" value="1"/>
</dbReference>
<dbReference type="HAMAP" id="MF_00519">
    <property type="entry name" value="Arabinose_Isome"/>
    <property type="match status" value="1"/>
</dbReference>
<dbReference type="InterPro" id="IPR024664">
    <property type="entry name" value="Ara_Isoase_C"/>
</dbReference>
<dbReference type="InterPro" id="IPR055390">
    <property type="entry name" value="AraA_central"/>
</dbReference>
<dbReference type="InterPro" id="IPR055389">
    <property type="entry name" value="AraA_N"/>
</dbReference>
<dbReference type="InterPro" id="IPR038583">
    <property type="entry name" value="AraA_N_sf"/>
</dbReference>
<dbReference type="InterPro" id="IPR004216">
    <property type="entry name" value="Fuc/Ara_isomerase_C"/>
</dbReference>
<dbReference type="InterPro" id="IPR009015">
    <property type="entry name" value="Fucose_isomerase_N/cen_sf"/>
</dbReference>
<dbReference type="InterPro" id="IPR003762">
    <property type="entry name" value="Lara_isomerase"/>
</dbReference>
<dbReference type="NCBIfam" id="NF002795">
    <property type="entry name" value="PRK02929.1"/>
    <property type="match status" value="1"/>
</dbReference>
<dbReference type="PANTHER" id="PTHR38464">
    <property type="entry name" value="L-ARABINOSE ISOMERASE"/>
    <property type="match status" value="1"/>
</dbReference>
<dbReference type="PANTHER" id="PTHR38464:SF1">
    <property type="entry name" value="L-ARABINOSE ISOMERASE"/>
    <property type="match status" value="1"/>
</dbReference>
<dbReference type="Pfam" id="PF24856">
    <property type="entry name" value="AraA_central"/>
    <property type="match status" value="1"/>
</dbReference>
<dbReference type="Pfam" id="PF02610">
    <property type="entry name" value="AraA_N"/>
    <property type="match status" value="1"/>
</dbReference>
<dbReference type="Pfam" id="PF11762">
    <property type="entry name" value="Arabinose_Iso_C"/>
    <property type="match status" value="1"/>
</dbReference>
<dbReference type="PIRSF" id="PIRSF001478">
    <property type="entry name" value="L-ara_isomerase"/>
    <property type="match status" value="1"/>
</dbReference>
<dbReference type="SUPFAM" id="SSF50443">
    <property type="entry name" value="FucI/AraA C-terminal domain-like"/>
    <property type="match status" value="1"/>
</dbReference>
<dbReference type="SUPFAM" id="SSF53743">
    <property type="entry name" value="FucI/AraA N-terminal and middle domains"/>
    <property type="match status" value="1"/>
</dbReference>
<sequence>MTIFDNYEVWFVIGSQHLYGAETLRQVTQHAEHVVNALNTEAKLPCKLVLKPLGTSPDEITAICRDANYDDRCAGLVVWLHTFSPAKMWINGLSILNKPLLQFHTQFNAALPWDSIDMDFMNLNQTAHGGREFGFIGARMRQQHAVVTGHWQDKEAHTRIGAWMRQAVSKQDTRQLKVCRFGDNMREVAVTDGDKVAAQIKFGFSVNTWAVGDLVQVVNSIGDGDISALIDEYESSYTLTPATQIHGDKRQNVREAARIELGMKRFLEQGGFHAFTTTFEDLHGLKQLPGLAVQRLMQQGYGFAGEGDWKTAALLRIMKVMSTGLQGGTSFMEDYTYHFEKGNDLVLGSHMLEVCPSIAVEEKPILDVQHLGIGGKEDPARLIFNTQTGPAIVASLIDLGDRYRLLVNCIDTVKTPHSLPKLPVANALWKAQPDLPTASEAWILAGGAHHTVFSHALDLNDMRQFAEIHDIEIAVIDNDTRLPAFKDALRWNEVYYGLKR</sequence>
<name>ARAA_SALPK</name>
<accession>B5BL43</accession>
<feature type="chain" id="PRO_1000127618" description="L-arabinose isomerase">
    <location>
        <begin position="1"/>
        <end position="500"/>
    </location>
</feature>
<feature type="binding site" evidence="1">
    <location>
        <position position="306"/>
    </location>
    <ligand>
        <name>Mn(2+)</name>
        <dbReference type="ChEBI" id="CHEBI:29035"/>
    </ligand>
</feature>
<feature type="binding site" evidence="1">
    <location>
        <position position="333"/>
    </location>
    <ligand>
        <name>Mn(2+)</name>
        <dbReference type="ChEBI" id="CHEBI:29035"/>
    </ligand>
</feature>
<feature type="binding site" evidence="1">
    <location>
        <position position="350"/>
    </location>
    <ligand>
        <name>Mn(2+)</name>
        <dbReference type="ChEBI" id="CHEBI:29035"/>
    </ligand>
</feature>
<feature type="binding site" evidence="1">
    <location>
        <position position="450"/>
    </location>
    <ligand>
        <name>Mn(2+)</name>
        <dbReference type="ChEBI" id="CHEBI:29035"/>
    </ligand>
</feature>